<dbReference type="EC" id="6.3.2.8" evidence="1"/>
<dbReference type="EMBL" id="CP001227">
    <property type="protein sequence ID" value="ACR47275.1"/>
    <property type="molecule type" value="Genomic_DNA"/>
</dbReference>
<dbReference type="RefSeq" id="WP_012736548.1">
    <property type="nucleotide sequence ID" value="NC_012730.1"/>
</dbReference>
<dbReference type="SMR" id="C4K124"/>
<dbReference type="KEGG" id="rpk:RPR_02140"/>
<dbReference type="HOGENOM" id="CLU_028104_2_2_5"/>
<dbReference type="UniPathway" id="UPA00219"/>
<dbReference type="Proteomes" id="UP000005015">
    <property type="component" value="Chromosome"/>
</dbReference>
<dbReference type="GO" id="GO:0005737">
    <property type="term" value="C:cytoplasm"/>
    <property type="evidence" value="ECO:0007669"/>
    <property type="project" value="UniProtKB-SubCell"/>
</dbReference>
<dbReference type="GO" id="GO:0005524">
    <property type="term" value="F:ATP binding"/>
    <property type="evidence" value="ECO:0007669"/>
    <property type="project" value="UniProtKB-UniRule"/>
</dbReference>
<dbReference type="GO" id="GO:0008763">
    <property type="term" value="F:UDP-N-acetylmuramate-L-alanine ligase activity"/>
    <property type="evidence" value="ECO:0007669"/>
    <property type="project" value="UniProtKB-UniRule"/>
</dbReference>
<dbReference type="GO" id="GO:0051301">
    <property type="term" value="P:cell division"/>
    <property type="evidence" value="ECO:0007669"/>
    <property type="project" value="UniProtKB-KW"/>
</dbReference>
<dbReference type="GO" id="GO:0071555">
    <property type="term" value="P:cell wall organization"/>
    <property type="evidence" value="ECO:0007669"/>
    <property type="project" value="UniProtKB-KW"/>
</dbReference>
<dbReference type="GO" id="GO:0009252">
    <property type="term" value="P:peptidoglycan biosynthetic process"/>
    <property type="evidence" value="ECO:0007669"/>
    <property type="project" value="UniProtKB-UniRule"/>
</dbReference>
<dbReference type="GO" id="GO:0008360">
    <property type="term" value="P:regulation of cell shape"/>
    <property type="evidence" value="ECO:0007669"/>
    <property type="project" value="UniProtKB-KW"/>
</dbReference>
<dbReference type="Gene3D" id="3.90.190.20">
    <property type="entry name" value="Mur ligase, C-terminal domain"/>
    <property type="match status" value="1"/>
</dbReference>
<dbReference type="Gene3D" id="3.40.1190.10">
    <property type="entry name" value="Mur-like, catalytic domain"/>
    <property type="match status" value="1"/>
</dbReference>
<dbReference type="Gene3D" id="3.40.50.720">
    <property type="entry name" value="NAD(P)-binding Rossmann-like Domain"/>
    <property type="match status" value="1"/>
</dbReference>
<dbReference type="HAMAP" id="MF_00046">
    <property type="entry name" value="MurC"/>
    <property type="match status" value="1"/>
</dbReference>
<dbReference type="InterPro" id="IPR036565">
    <property type="entry name" value="Mur-like_cat_sf"/>
</dbReference>
<dbReference type="InterPro" id="IPR004101">
    <property type="entry name" value="Mur_ligase_C"/>
</dbReference>
<dbReference type="InterPro" id="IPR036615">
    <property type="entry name" value="Mur_ligase_C_dom_sf"/>
</dbReference>
<dbReference type="InterPro" id="IPR013221">
    <property type="entry name" value="Mur_ligase_cen"/>
</dbReference>
<dbReference type="InterPro" id="IPR000713">
    <property type="entry name" value="Mur_ligase_N"/>
</dbReference>
<dbReference type="InterPro" id="IPR050061">
    <property type="entry name" value="MurCDEF_pg_biosynth"/>
</dbReference>
<dbReference type="InterPro" id="IPR005758">
    <property type="entry name" value="UDP-N-AcMur_Ala_ligase_MurC"/>
</dbReference>
<dbReference type="NCBIfam" id="TIGR01082">
    <property type="entry name" value="murC"/>
    <property type="match status" value="1"/>
</dbReference>
<dbReference type="PANTHER" id="PTHR43445:SF3">
    <property type="entry name" value="UDP-N-ACETYLMURAMATE--L-ALANINE LIGASE"/>
    <property type="match status" value="1"/>
</dbReference>
<dbReference type="PANTHER" id="PTHR43445">
    <property type="entry name" value="UDP-N-ACETYLMURAMATE--L-ALANINE LIGASE-RELATED"/>
    <property type="match status" value="1"/>
</dbReference>
<dbReference type="Pfam" id="PF01225">
    <property type="entry name" value="Mur_ligase"/>
    <property type="match status" value="1"/>
</dbReference>
<dbReference type="Pfam" id="PF02875">
    <property type="entry name" value="Mur_ligase_C"/>
    <property type="match status" value="1"/>
</dbReference>
<dbReference type="Pfam" id="PF08245">
    <property type="entry name" value="Mur_ligase_M"/>
    <property type="match status" value="1"/>
</dbReference>
<dbReference type="SUPFAM" id="SSF51984">
    <property type="entry name" value="MurCD N-terminal domain"/>
    <property type="match status" value="1"/>
</dbReference>
<dbReference type="SUPFAM" id="SSF53623">
    <property type="entry name" value="MurD-like peptide ligases, catalytic domain"/>
    <property type="match status" value="1"/>
</dbReference>
<dbReference type="SUPFAM" id="SSF53244">
    <property type="entry name" value="MurD-like peptide ligases, peptide-binding domain"/>
    <property type="match status" value="1"/>
</dbReference>
<feature type="chain" id="PRO_1000202189" description="UDP-N-acetylmuramate--L-alanine ligase">
    <location>
        <begin position="1"/>
        <end position="485"/>
    </location>
</feature>
<feature type="binding site" evidence="1">
    <location>
        <begin position="120"/>
        <end position="126"/>
    </location>
    <ligand>
        <name>ATP</name>
        <dbReference type="ChEBI" id="CHEBI:30616"/>
    </ligand>
</feature>
<gene>
    <name evidence="1" type="primary">murC</name>
    <name type="ordered locus">RPR_02140</name>
</gene>
<evidence type="ECO:0000255" key="1">
    <source>
        <dbReference type="HAMAP-Rule" id="MF_00046"/>
    </source>
</evidence>
<keyword id="KW-0067">ATP-binding</keyword>
<keyword id="KW-0131">Cell cycle</keyword>
<keyword id="KW-0132">Cell division</keyword>
<keyword id="KW-0133">Cell shape</keyword>
<keyword id="KW-0961">Cell wall biogenesis/degradation</keyword>
<keyword id="KW-0963">Cytoplasm</keyword>
<keyword id="KW-0436">Ligase</keyword>
<keyword id="KW-0547">Nucleotide-binding</keyword>
<keyword id="KW-0573">Peptidoglycan synthesis</keyword>
<protein>
    <recommendedName>
        <fullName evidence="1">UDP-N-acetylmuramate--L-alanine ligase</fullName>
        <ecNumber evidence="1">6.3.2.8</ecNumber>
    </recommendedName>
    <alternativeName>
        <fullName evidence="1">UDP-N-acetylmuramoyl-L-alanine synthetase</fullName>
    </alternativeName>
</protein>
<sequence>MLLLELKKTNQTLETIHFIGIGGVGMSGIAEILYNLGYKVQGSDLVENYNTKRLESYGIKIFLGHAEQNITNVSYVVISSAINPKNPEIKEALERKIPIIRRADMLAELMRLKCSVAVSGSHGKTTTTSLVACLFEAAGLCPTVINGGIINNKLTNAYLGSSNYLIAEADESDATFIHIPSTIAIITNIDPEHLDYYRDFETLIGAFRSFITNLPFYGFAVCCIDHKIVRKLVDEITERKIVTYGIDSEDAHIIAFNINTDIASSTFDVKISLPNVLGTTIIEKITIPTPGRHNILNSLAAIAVGIELDFGIKAIKNGFNNFKGVKRRFTKVAEYNNASIIDDYAHHPEEIKATLATAKNIANKQNGKVIAIFQPHRYSRMQYLFDDFMLCFADADILYITDIYAAGENPIEGITGRSLVDKITKRKHHDKANFLAELDDAVGVIIDNAASGDMIIMMGAGNISSFANELDGRLSSSGFSCHTVV</sequence>
<comment type="function">
    <text evidence="1">Cell wall formation.</text>
</comment>
<comment type="catalytic activity">
    <reaction evidence="1">
        <text>UDP-N-acetyl-alpha-D-muramate + L-alanine + ATP = UDP-N-acetyl-alpha-D-muramoyl-L-alanine + ADP + phosphate + H(+)</text>
        <dbReference type="Rhea" id="RHEA:23372"/>
        <dbReference type="ChEBI" id="CHEBI:15378"/>
        <dbReference type="ChEBI" id="CHEBI:30616"/>
        <dbReference type="ChEBI" id="CHEBI:43474"/>
        <dbReference type="ChEBI" id="CHEBI:57972"/>
        <dbReference type="ChEBI" id="CHEBI:70757"/>
        <dbReference type="ChEBI" id="CHEBI:83898"/>
        <dbReference type="ChEBI" id="CHEBI:456216"/>
        <dbReference type="EC" id="6.3.2.8"/>
    </reaction>
</comment>
<comment type="pathway">
    <text evidence="1">Cell wall biogenesis; peptidoglycan biosynthesis.</text>
</comment>
<comment type="subcellular location">
    <subcellularLocation>
        <location evidence="1">Cytoplasm</location>
    </subcellularLocation>
</comment>
<comment type="similarity">
    <text evidence="1">Belongs to the MurCDEF family.</text>
</comment>
<reference key="1">
    <citation type="journal article" date="2009" name="PLoS ONE">
        <title>Genome sequence of the endosymbiont Rickettsia peacockii and comparison with virulent Rickettsia rickettsii: identification of virulence factors.</title>
        <authorList>
            <person name="Felsheim R.F."/>
            <person name="Kurtti T.J."/>
            <person name="Munderloh U.G."/>
        </authorList>
    </citation>
    <scope>NUCLEOTIDE SEQUENCE [LARGE SCALE GENOMIC DNA]</scope>
    <source>
        <strain>Rustic</strain>
    </source>
</reference>
<organism>
    <name type="scientific">Rickettsia peacockii (strain Rustic)</name>
    <dbReference type="NCBI Taxonomy" id="562019"/>
    <lineage>
        <taxon>Bacteria</taxon>
        <taxon>Pseudomonadati</taxon>
        <taxon>Pseudomonadota</taxon>
        <taxon>Alphaproteobacteria</taxon>
        <taxon>Rickettsiales</taxon>
        <taxon>Rickettsiaceae</taxon>
        <taxon>Rickettsieae</taxon>
        <taxon>Rickettsia</taxon>
        <taxon>spotted fever group</taxon>
    </lineage>
</organism>
<name>MURC_RICPU</name>
<accession>C4K124</accession>
<proteinExistence type="inferred from homology"/>